<feature type="chain" id="PRO_1000060523" description="Chaperone protein HtpG">
    <location>
        <begin position="1"/>
        <end position="626"/>
    </location>
</feature>
<feature type="region of interest" description="A; substrate-binding" evidence="1">
    <location>
        <begin position="1"/>
        <end position="341"/>
    </location>
</feature>
<feature type="region of interest" description="B" evidence="1">
    <location>
        <begin position="342"/>
        <end position="552"/>
    </location>
</feature>
<feature type="region of interest" description="C" evidence="1">
    <location>
        <begin position="553"/>
        <end position="626"/>
    </location>
</feature>
<evidence type="ECO:0000255" key="1">
    <source>
        <dbReference type="HAMAP-Rule" id="MF_00505"/>
    </source>
</evidence>
<keyword id="KW-0067">ATP-binding</keyword>
<keyword id="KW-0143">Chaperone</keyword>
<keyword id="KW-0963">Cytoplasm</keyword>
<keyword id="KW-0547">Nucleotide-binding</keyword>
<keyword id="KW-1185">Reference proteome</keyword>
<keyword id="KW-0346">Stress response</keyword>
<reference key="1">
    <citation type="submission" date="2007-10" db="EMBL/GenBank/DDBJ databases">
        <title>Complete genome of Alkaliphilus oremlandii OhILAs.</title>
        <authorList>
            <person name="Copeland A."/>
            <person name="Lucas S."/>
            <person name="Lapidus A."/>
            <person name="Barry K."/>
            <person name="Detter J.C."/>
            <person name="Glavina del Rio T."/>
            <person name="Hammon N."/>
            <person name="Israni S."/>
            <person name="Dalin E."/>
            <person name="Tice H."/>
            <person name="Pitluck S."/>
            <person name="Chain P."/>
            <person name="Malfatti S."/>
            <person name="Shin M."/>
            <person name="Vergez L."/>
            <person name="Schmutz J."/>
            <person name="Larimer F."/>
            <person name="Land M."/>
            <person name="Hauser L."/>
            <person name="Kyrpides N."/>
            <person name="Mikhailova N."/>
            <person name="Stolz J.F."/>
            <person name="Dawson A."/>
            <person name="Fisher E."/>
            <person name="Crable B."/>
            <person name="Perera E."/>
            <person name="Lisak J."/>
            <person name="Ranganathan M."/>
            <person name="Basu P."/>
            <person name="Richardson P."/>
        </authorList>
    </citation>
    <scope>NUCLEOTIDE SEQUENCE [LARGE SCALE GENOMIC DNA]</scope>
    <source>
        <strain>OhILAs</strain>
    </source>
</reference>
<accession>A8MGJ3</accession>
<comment type="function">
    <text evidence="1">Molecular chaperone. Has ATPase activity.</text>
</comment>
<comment type="subunit">
    <text evidence="1">Homodimer.</text>
</comment>
<comment type="subcellular location">
    <subcellularLocation>
        <location evidence="1">Cytoplasm</location>
    </subcellularLocation>
</comment>
<comment type="similarity">
    <text evidence="1">Belongs to the heat shock protein 90 family.</text>
</comment>
<name>HTPG_ALKOO</name>
<proteinExistence type="inferred from homology"/>
<gene>
    <name evidence="1" type="primary">htpG</name>
    <name type="ordered locus">Clos_1676</name>
</gene>
<sequence>METKQFKAESKRLLDLMIHSIYTQKEIFLRELISNASDAIDKIYYRALTDEALNFNKEDYYIKIIPDKEKRILRIIDTGIGMTKEELEENLGVIAKSGSLAFKSAHELKDGYDIIGQFGVGFYSSFMVAETVTVISKSIDSESGYKWESTGVDGYTIEPWDKDTVGTEIVLRIKEDTEDENYSEYLEEYRLRNIIKKYSDFIRYPIKMDIHNKRLKENSEDDYEDYVEEQTINSMVPIWRKNKNELTKEDYDNFYMEKRYGFDKPVKHIHISADGAVRYNAILFIPERTPFDYYTKEYEKGLELYSNGVLIMNKCSDLLPDYFSFVKGMVDSEDLSLNISREMLQHDRQLKLIGKNIKNKIKNELMSLLKEDRTQYEAFFEAFGRQLKYGIYSEFGSNKDVLQDLLLFYSSKEKKLVTLDEYISRMSEEQKYIYYATGESKERIEKLPQTELVSEKGFEILYLTEDIDEFAIKVLMSYKDKEFKSVSSSDLGIEDSETEKNTETEELENKELFEKMTALLSDKVTAVRISKRLKSHPVCLANEGEISIEMEKILSAMPNNENIKANKILEINGNHQVFEVLKDAYKNDSEKFGLFTELLYNQALLIEGLPINDPVEFSNSICKLMI</sequence>
<dbReference type="EMBL" id="CP000853">
    <property type="protein sequence ID" value="ABW19216.1"/>
    <property type="molecule type" value="Genomic_DNA"/>
</dbReference>
<dbReference type="RefSeq" id="WP_012159528.1">
    <property type="nucleotide sequence ID" value="NC_009922.1"/>
</dbReference>
<dbReference type="SMR" id="A8MGJ3"/>
<dbReference type="STRING" id="350688.Clos_1676"/>
<dbReference type="KEGG" id="aoe:Clos_1676"/>
<dbReference type="eggNOG" id="COG0326">
    <property type="taxonomic scope" value="Bacteria"/>
</dbReference>
<dbReference type="HOGENOM" id="CLU_006684_3_0_9"/>
<dbReference type="OrthoDB" id="9802640at2"/>
<dbReference type="Proteomes" id="UP000000269">
    <property type="component" value="Chromosome"/>
</dbReference>
<dbReference type="GO" id="GO:0005737">
    <property type="term" value="C:cytoplasm"/>
    <property type="evidence" value="ECO:0007669"/>
    <property type="project" value="UniProtKB-SubCell"/>
</dbReference>
<dbReference type="GO" id="GO:0005524">
    <property type="term" value="F:ATP binding"/>
    <property type="evidence" value="ECO:0007669"/>
    <property type="project" value="UniProtKB-UniRule"/>
</dbReference>
<dbReference type="GO" id="GO:0016887">
    <property type="term" value="F:ATP hydrolysis activity"/>
    <property type="evidence" value="ECO:0007669"/>
    <property type="project" value="InterPro"/>
</dbReference>
<dbReference type="GO" id="GO:0140662">
    <property type="term" value="F:ATP-dependent protein folding chaperone"/>
    <property type="evidence" value="ECO:0007669"/>
    <property type="project" value="InterPro"/>
</dbReference>
<dbReference type="GO" id="GO:0051082">
    <property type="term" value="F:unfolded protein binding"/>
    <property type="evidence" value="ECO:0007669"/>
    <property type="project" value="UniProtKB-UniRule"/>
</dbReference>
<dbReference type="CDD" id="cd16927">
    <property type="entry name" value="HATPase_Hsp90-like"/>
    <property type="match status" value="1"/>
</dbReference>
<dbReference type="FunFam" id="1.20.120.790:FF:000006">
    <property type="entry name" value="Chaperone protein HtpG"/>
    <property type="match status" value="1"/>
</dbReference>
<dbReference type="FunFam" id="3.40.50.11260:FF:000008">
    <property type="entry name" value="Chaperone protein HtpG"/>
    <property type="match status" value="1"/>
</dbReference>
<dbReference type="FunFam" id="3.30.565.10:FF:000357">
    <property type="entry name" value="Heat shock protein HSP 90-beta"/>
    <property type="match status" value="1"/>
</dbReference>
<dbReference type="Gene3D" id="3.30.230.80">
    <property type="match status" value="1"/>
</dbReference>
<dbReference type="Gene3D" id="3.40.50.11260">
    <property type="match status" value="1"/>
</dbReference>
<dbReference type="Gene3D" id="1.20.120.790">
    <property type="entry name" value="Heat shock protein 90, C-terminal domain"/>
    <property type="match status" value="1"/>
</dbReference>
<dbReference type="Gene3D" id="3.30.565.10">
    <property type="entry name" value="Histidine kinase-like ATPase, C-terminal domain"/>
    <property type="match status" value="1"/>
</dbReference>
<dbReference type="HAMAP" id="MF_00505">
    <property type="entry name" value="HSP90"/>
    <property type="match status" value="1"/>
</dbReference>
<dbReference type="InterPro" id="IPR036890">
    <property type="entry name" value="HATPase_C_sf"/>
</dbReference>
<dbReference type="InterPro" id="IPR019805">
    <property type="entry name" value="Heat_shock_protein_90_CS"/>
</dbReference>
<dbReference type="InterPro" id="IPR037196">
    <property type="entry name" value="HSP90_C"/>
</dbReference>
<dbReference type="InterPro" id="IPR001404">
    <property type="entry name" value="Hsp90_fam"/>
</dbReference>
<dbReference type="InterPro" id="IPR020575">
    <property type="entry name" value="Hsp90_N"/>
</dbReference>
<dbReference type="InterPro" id="IPR020568">
    <property type="entry name" value="Ribosomal_Su5_D2-typ_SF"/>
</dbReference>
<dbReference type="NCBIfam" id="NF003555">
    <property type="entry name" value="PRK05218.1"/>
    <property type="match status" value="1"/>
</dbReference>
<dbReference type="PANTHER" id="PTHR11528">
    <property type="entry name" value="HEAT SHOCK PROTEIN 90 FAMILY MEMBER"/>
    <property type="match status" value="1"/>
</dbReference>
<dbReference type="Pfam" id="PF13589">
    <property type="entry name" value="HATPase_c_3"/>
    <property type="match status" value="1"/>
</dbReference>
<dbReference type="Pfam" id="PF00183">
    <property type="entry name" value="HSP90"/>
    <property type="match status" value="2"/>
</dbReference>
<dbReference type="PIRSF" id="PIRSF002583">
    <property type="entry name" value="Hsp90"/>
    <property type="match status" value="1"/>
</dbReference>
<dbReference type="PRINTS" id="PR00775">
    <property type="entry name" value="HEATSHOCK90"/>
</dbReference>
<dbReference type="SUPFAM" id="SSF55874">
    <property type="entry name" value="ATPase domain of HSP90 chaperone/DNA topoisomerase II/histidine kinase"/>
    <property type="match status" value="1"/>
</dbReference>
<dbReference type="SUPFAM" id="SSF110942">
    <property type="entry name" value="HSP90 C-terminal domain"/>
    <property type="match status" value="1"/>
</dbReference>
<dbReference type="SUPFAM" id="SSF54211">
    <property type="entry name" value="Ribosomal protein S5 domain 2-like"/>
    <property type="match status" value="1"/>
</dbReference>
<dbReference type="PROSITE" id="PS00298">
    <property type="entry name" value="HSP90"/>
    <property type="match status" value="1"/>
</dbReference>
<organism>
    <name type="scientific">Alkaliphilus oremlandii (strain OhILAs)</name>
    <name type="common">Clostridium oremlandii (strain OhILAs)</name>
    <dbReference type="NCBI Taxonomy" id="350688"/>
    <lineage>
        <taxon>Bacteria</taxon>
        <taxon>Bacillati</taxon>
        <taxon>Bacillota</taxon>
        <taxon>Clostridia</taxon>
        <taxon>Peptostreptococcales</taxon>
        <taxon>Natronincolaceae</taxon>
        <taxon>Alkaliphilus</taxon>
    </lineage>
</organism>
<protein>
    <recommendedName>
        <fullName evidence="1">Chaperone protein HtpG</fullName>
    </recommendedName>
    <alternativeName>
        <fullName evidence="1">Heat shock protein HtpG</fullName>
    </alternativeName>
    <alternativeName>
        <fullName evidence="1">High temperature protein G</fullName>
    </alternativeName>
</protein>